<name>FYV10_ASPNC</name>
<organism>
    <name type="scientific">Aspergillus niger (strain ATCC MYA-4892 / CBS 513.88 / FGSC A1513)</name>
    <dbReference type="NCBI Taxonomy" id="425011"/>
    <lineage>
        <taxon>Eukaryota</taxon>
        <taxon>Fungi</taxon>
        <taxon>Dikarya</taxon>
        <taxon>Ascomycota</taxon>
        <taxon>Pezizomycotina</taxon>
        <taxon>Eurotiomycetes</taxon>
        <taxon>Eurotiomycetidae</taxon>
        <taxon>Eurotiales</taxon>
        <taxon>Aspergillaceae</taxon>
        <taxon>Aspergillus</taxon>
        <taxon>Aspergillus subgen. Circumdati</taxon>
    </lineage>
</organism>
<dbReference type="EMBL" id="AM270393">
    <property type="protein sequence ID" value="CAL00559.1"/>
    <property type="status" value="ALT_SEQ"/>
    <property type="molecule type" value="Genomic_DNA"/>
</dbReference>
<dbReference type="RefSeq" id="XP_001398445.2">
    <property type="nucleotide sequence ID" value="XM_001398408.2"/>
</dbReference>
<dbReference type="SMR" id="A2R9P6"/>
<dbReference type="EnsemblFungi" id="CAL00559">
    <property type="protein sequence ID" value="CAL00559"/>
    <property type="gene ID" value="An17g02160"/>
</dbReference>
<dbReference type="OrthoDB" id="79717at5052"/>
<dbReference type="Proteomes" id="UP000006706">
    <property type="component" value="Chromosome 5L"/>
</dbReference>
<dbReference type="GO" id="GO:0005737">
    <property type="term" value="C:cytoplasm"/>
    <property type="evidence" value="ECO:0007669"/>
    <property type="project" value="UniProtKB-SubCell"/>
</dbReference>
<dbReference type="GO" id="GO:0034657">
    <property type="term" value="C:GID complex"/>
    <property type="evidence" value="ECO:0007669"/>
    <property type="project" value="TreeGrafter"/>
</dbReference>
<dbReference type="GO" id="GO:0005634">
    <property type="term" value="C:nucleus"/>
    <property type="evidence" value="ECO:0007669"/>
    <property type="project" value="UniProtKB-SubCell"/>
</dbReference>
<dbReference type="GO" id="GO:0061630">
    <property type="term" value="F:ubiquitin protein ligase activity"/>
    <property type="evidence" value="ECO:0007669"/>
    <property type="project" value="InterPro"/>
</dbReference>
<dbReference type="GO" id="GO:0008270">
    <property type="term" value="F:zinc ion binding"/>
    <property type="evidence" value="ECO:0007669"/>
    <property type="project" value="UniProtKB-KW"/>
</dbReference>
<dbReference type="GO" id="GO:0045721">
    <property type="term" value="P:negative regulation of gluconeogenesis"/>
    <property type="evidence" value="ECO:0007669"/>
    <property type="project" value="UniProtKB-ARBA"/>
</dbReference>
<dbReference type="GO" id="GO:0043161">
    <property type="term" value="P:proteasome-mediated ubiquitin-dependent protein catabolic process"/>
    <property type="evidence" value="ECO:0007669"/>
    <property type="project" value="InterPro"/>
</dbReference>
<dbReference type="InterPro" id="IPR013144">
    <property type="entry name" value="CRA_dom"/>
</dbReference>
<dbReference type="InterPro" id="IPR024964">
    <property type="entry name" value="CTLH/CRA"/>
</dbReference>
<dbReference type="InterPro" id="IPR006595">
    <property type="entry name" value="CTLH_C"/>
</dbReference>
<dbReference type="InterPro" id="IPR045098">
    <property type="entry name" value="Fyv10_fam"/>
</dbReference>
<dbReference type="InterPro" id="IPR006594">
    <property type="entry name" value="LisH"/>
</dbReference>
<dbReference type="InterPro" id="IPR044063">
    <property type="entry name" value="ZF_RING_GID"/>
</dbReference>
<dbReference type="PANTHER" id="PTHR12170:SF2">
    <property type="entry name" value="E3 UBIQUITIN-PROTEIN TRANSFERASE MAEA"/>
    <property type="match status" value="1"/>
</dbReference>
<dbReference type="PANTHER" id="PTHR12170">
    <property type="entry name" value="MACROPHAGE ERYTHROBLAST ATTACHER-RELATED"/>
    <property type="match status" value="1"/>
</dbReference>
<dbReference type="Pfam" id="PF10607">
    <property type="entry name" value="CTLH"/>
    <property type="match status" value="1"/>
</dbReference>
<dbReference type="SMART" id="SM00757">
    <property type="entry name" value="CRA"/>
    <property type="match status" value="1"/>
</dbReference>
<dbReference type="SMART" id="SM00668">
    <property type="entry name" value="CTLH"/>
    <property type="match status" value="1"/>
</dbReference>
<dbReference type="PROSITE" id="PS50897">
    <property type="entry name" value="CTLH"/>
    <property type="match status" value="1"/>
</dbReference>
<dbReference type="PROSITE" id="PS50896">
    <property type="entry name" value="LISH"/>
    <property type="match status" value="1"/>
</dbReference>
<dbReference type="PROSITE" id="PS51867">
    <property type="entry name" value="ZF_RING_GID"/>
    <property type="match status" value="1"/>
</dbReference>
<sequence>MAAELTSTRLNAENHLLLDQPLLRLPHELARRNFKSVQRLVEREKEYVLPALKETANASLSNEQTPDQALAALDAMISRMQGLKRKMENLHQEERKIQEQSRKRIQHLEKLHQIPSLADVQYDQWARVRLDRLMIDHMLRSGYIKSAQQLAREKGIEDLVDLNVFVQCQRIAESLRTGETKDALQWCGENKAALKKSQYNLEFELRLQQYIEMVRAGHKERFNDAMIHAKRYLAPYLETQSVEIHRAAGLLAFPPDTKAEPYKSMYAHERWAYLSDLFVRTHHELLSLSSRPLLHIALSAGLSALKTPSCHSAYTSSSSNSLSTTTSVCPICSTELNELARNMPYAHHTKSYVENDPIVLPNGRIYGQQRLLEMSKKVGCVEVGKVKDPTTGEVFNEGDMKKVYIM</sequence>
<evidence type="ECO:0000250" key="1"/>
<evidence type="ECO:0000255" key="2">
    <source>
        <dbReference type="PROSITE-ProRule" id="PRU00058"/>
    </source>
</evidence>
<evidence type="ECO:0000255" key="3">
    <source>
        <dbReference type="PROSITE-ProRule" id="PRU00126"/>
    </source>
</evidence>
<evidence type="ECO:0000255" key="4">
    <source>
        <dbReference type="PROSITE-ProRule" id="PRU01215"/>
    </source>
</evidence>
<evidence type="ECO:0000305" key="5"/>
<protein>
    <recommendedName>
        <fullName>Protein fyv10</fullName>
    </recommendedName>
</protein>
<keyword id="KW-0963">Cytoplasm</keyword>
<keyword id="KW-0479">Metal-binding</keyword>
<keyword id="KW-0539">Nucleus</keyword>
<keyword id="KW-1185">Reference proteome</keyword>
<keyword id="KW-0862">Zinc</keyword>
<keyword id="KW-0863">Zinc-finger</keyword>
<comment type="function">
    <text evidence="1">Involved in the proteasome-dependent degradation of fructose-1,6-bisphosphatase.</text>
</comment>
<comment type="subcellular location">
    <subcellularLocation>
        <location evidence="1">Cytoplasm</location>
    </subcellularLocation>
    <subcellularLocation>
        <location evidence="1">Nucleus</location>
    </subcellularLocation>
</comment>
<comment type="similarity">
    <text evidence="5">Belongs to the FYV10 family.</text>
</comment>
<comment type="sequence caution" evidence="5">
    <conflict type="erroneous gene model prediction">
        <sequence resource="EMBL-CDS" id="CAL00559"/>
    </conflict>
</comment>
<proteinExistence type="inferred from homology"/>
<gene>
    <name type="primary">fyv10</name>
    <name type="ORF">An17g02160</name>
</gene>
<reference key="1">
    <citation type="journal article" date="2007" name="Nat. Biotechnol.">
        <title>Genome sequencing and analysis of the versatile cell factory Aspergillus niger CBS 513.88.</title>
        <authorList>
            <person name="Pel H.J."/>
            <person name="de Winde J.H."/>
            <person name="Archer D.B."/>
            <person name="Dyer P.S."/>
            <person name="Hofmann G."/>
            <person name="Schaap P.J."/>
            <person name="Turner G."/>
            <person name="de Vries R.P."/>
            <person name="Albang R."/>
            <person name="Albermann K."/>
            <person name="Andersen M.R."/>
            <person name="Bendtsen J.D."/>
            <person name="Benen J.A.E."/>
            <person name="van den Berg M."/>
            <person name="Breestraat S."/>
            <person name="Caddick M.X."/>
            <person name="Contreras R."/>
            <person name="Cornell M."/>
            <person name="Coutinho P.M."/>
            <person name="Danchin E.G.J."/>
            <person name="Debets A.J.M."/>
            <person name="Dekker P."/>
            <person name="van Dijck P.W.M."/>
            <person name="van Dijk A."/>
            <person name="Dijkhuizen L."/>
            <person name="Driessen A.J.M."/>
            <person name="d'Enfert C."/>
            <person name="Geysens S."/>
            <person name="Goosen C."/>
            <person name="Groot G.S.P."/>
            <person name="de Groot P.W.J."/>
            <person name="Guillemette T."/>
            <person name="Henrissat B."/>
            <person name="Herweijer M."/>
            <person name="van den Hombergh J.P.T.W."/>
            <person name="van den Hondel C.A.M.J.J."/>
            <person name="van der Heijden R.T.J.M."/>
            <person name="van der Kaaij R.M."/>
            <person name="Klis F.M."/>
            <person name="Kools H.J."/>
            <person name="Kubicek C.P."/>
            <person name="van Kuyk P.A."/>
            <person name="Lauber J."/>
            <person name="Lu X."/>
            <person name="van der Maarel M.J.E.C."/>
            <person name="Meulenberg R."/>
            <person name="Menke H."/>
            <person name="Mortimer M.A."/>
            <person name="Nielsen J."/>
            <person name="Oliver S.G."/>
            <person name="Olsthoorn M."/>
            <person name="Pal K."/>
            <person name="van Peij N.N.M.E."/>
            <person name="Ram A.F.J."/>
            <person name="Rinas U."/>
            <person name="Roubos J.A."/>
            <person name="Sagt C.M.J."/>
            <person name="Schmoll M."/>
            <person name="Sun J."/>
            <person name="Ussery D."/>
            <person name="Varga J."/>
            <person name="Vervecken W."/>
            <person name="van de Vondervoort P.J.J."/>
            <person name="Wedler H."/>
            <person name="Woesten H.A.B."/>
            <person name="Zeng A.-P."/>
            <person name="van Ooyen A.J.J."/>
            <person name="Visser J."/>
            <person name="Stam H."/>
        </authorList>
    </citation>
    <scope>NUCLEOTIDE SEQUENCE [LARGE SCALE GENOMIC DNA]</scope>
    <source>
        <strain>ATCC MYA-4892 / CBS 513.88 / FGSC A1513</strain>
    </source>
</reference>
<feature type="chain" id="PRO_0000292452" description="Protein fyv10">
    <location>
        <begin position="1"/>
        <end position="406"/>
    </location>
</feature>
<feature type="domain" description="LisH" evidence="3">
    <location>
        <begin position="126"/>
        <end position="158"/>
    </location>
</feature>
<feature type="domain" description="CTLH" evidence="2">
    <location>
        <begin position="164"/>
        <end position="221"/>
    </location>
</feature>
<feature type="zinc finger region" description="RING-Gid-type" evidence="4">
    <location>
        <begin position="329"/>
        <end position="391"/>
    </location>
</feature>
<accession>A2R9P6</accession>